<gene>
    <name evidence="1" type="primary">proA</name>
    <name type="ordered locus">Cyan7425_4304</name>
</gene>
<sequence>MSVTATPVNLTELAHRTRQAARDLAGLSPTARNQALEAVARSLENASDEILAANQTDCRLATETGLAPALYSRLKLDSTKLAGAIAGVRSVSQLADPIGAVQLQRELDTGLILKRMTCPLGVLGVIFEARPDAVVQISALAIKSGNGVLLKGGQEALHSCKALVAAIHQGLASAGLNPDSIALLTSREETLALLELDQQVDLIIPRGSNAFVRFVQEHTRIPVLGHAEGICHLYVDQTADLEQAVQIAIDAKTQYPAACNAIETLLVHRAIAPQFLPQLATALQALKVELRGDELTREIIPVAPAAESDWATEYSDLILSIKVVADLESAINHINTYGSRHTEAIVTADENAATTFLHEVDAAGVFHNCSTRFADGFRYGLGAEVGISTHKLPPRGPVGLEGLVTYKYQLVGQGQVVSTYSGPSAKPFTHRDL</sequence>
<evidence type="ECO:0000255" key="1">
    <source>
        <dbReference type="HAMAP-Rule" id="MF_00412"/>
    </source>
</evidence>
<organism>
    <name type="scientific">Cyanothece sp. (strain PCC 7425 / ATCC 29141)</name>
    <dbReference type="NCBI Taxonomy" id="395961"/>
    <lineage>
        <taxon>Bacteria</taxon>
        <taxon>Bacillati</taxon>
        <taxon>Cyanobacteriota</taxon>
        <taxon>Cyanophyceae</taxon>
        <taxon>Gomontiellales</taxon>
        <taxon>Cyanothecaceae</taxon>
        <taxon>Cyanothece</taxon>
    </lineage>
</organism>
<reference key="1">
    <citation type="journal article" date="2011" name="MBio">
        <title>Novel metabolic attributes of the genus Cyanothece, comprising a group of unicellular nitrogen-fixing Cyanobacteria.</title>
        <authorList>
            <person name="Bandyopadhyay A."/>
            <person name="Elvitigala T."/>
            <person name="Welsh E."/>
            <person name="Stockel J."/>
            <person name="Liberton M."/>
            <person name="Min H."/>
            <person name="Sherman L.A."/>
            <person name="Pakrasi H.B."/>
        </authorList>
    </citation>
    <scope>NUCLEOTIDE SEQUENCE [LARGE SCALE GENOMIC DNA]</scope>
    <source>
        <strain>PCC 7425 / ATCC 29141</strain>
    </source>
</reference>
<feature type="chain" id="PRO_1000193592" description="Gamma-glutamyl phosphate reductase">
    <location>
        <begin position="1"/>
        <end position="433"/>
    </location>
</feature>
<accession>B8HYG3</accession>
<protein>
    <recommendedName>
        <fullName evidence="1">Gamma-glutamyl phosphate reductase</fullName>
        <shortName evidence="1">GPR</shortName>
        <ecNumber evidence="1">1.2.1.41</ecNumber>
    </recommendedName>
    <alternativeName>
        <fullName evidence="1">Glutamate-5-semialdehyde dehydrogenase</fullName>
    </alternativeName>
    <alternativeName>
        <fullName evidence="1">Glutamyl-gamma-semialdehyde dehydrogenase</fullName>
        <shortName evidence="1">GSA dehydrogenase</shortName>
    </alternativeName>
</protein>
<proteinExistence type="inferred from homology"/>
<name>PROA_CYAP4</name>
<dbReference type="EC" id="1.2.1.41" evidence="1"/>
<dbReference type="EMBL" id="CP001344">
    <property type="protein sequence ID" value="ACL46617.1"/>
    <property type="molecule type" value="Genomic_DNA"/>
</dbReference>
<dbReference type="SMR" id="B8HYG3"/>
<dbReference type="STRING" id="395961.Cyan7425_4304"/>
<dbReference type="KEGG" id="cyn:Cyan7425_4304"/>
<dbReference type="eggNOG" id="COG0014">
    <property type="taxonomic scope" value="Bacteria"/>
</dbReference>
<dbReference type="HOGENOM" id="CLU_030231_0_1_3"/>
<dbReference type="OrthoDB" id="9809970at2"/>
<dbReference type="UniPathway" id="UPA00098">
    <property type="reaction ID" value="UER00360"/>
</dbReference>
<dbReference type="GO" id="GO:0005737">
    <property type="term" value="C:cytoplasm"/>
    <property type="evidence" value="ECO:0007669"/>
    <property type="project" value="UniProtKB-SubCell"/>
</dbReference>
<dbReference type="GO" id="GO:0004350">
    <property type="term" value="F:glutamate-5-semialdehyde dehydrogenase activity"/>
    <property type="evidence" value="ECO:0007669"/>
    <property type="project" value="UniProtKB-UniRule"/>
</dbReference>
<dbReference type="GO" id="GO:0050661">
    <property type="term" value="F:NADP binding"/>
    <property type="evidence" value="ECO:0007669"/>
    <property type="project" value="InterPro"/>
</dbReference>
<dbReference type="GO" id="GO:0055129">
    <property type="term" value="P:L-proline biosynthetic process"/>
    <property type="evidence" value="ECO:0007669"/>
    <property type="project" value="UniProtKB-UniRule"/>
</dbReference>
<dbReference type="CDD" id="cd07079">
    <property type="entry name" value="ALDH_F18-19_ProA-GPR"/>
    <property type="match status" value="1"/>
</dbReference>
<dbReference type="FunFam" id="3.40.309.10:FF:000006">
    <property type="entry name" value="Gamma-glutamyl phosphate reductase"/>
    <property type="match status" value="1"/>
</dbReference>
<dbReference type="Gene3D" id="3.40.605.10">
    <property type="entry name" value="Aldehyde Dehydrogenase, Chain A, domain 1"/>
    <property type="match status" value="1"/>
</dbReference>
<dbReference type="Gene3D" id="3.40.309.10">
    <property type="entry name" value="Aldehyde Dehydrogenase, Chain A, domain 2"/>
    <property type="match status" value="1"/>
</dbReference>
<dbReference type="HAMAP" id="MF_00412">
    <property type="entry name" value="ProA"/>
    <property type="match status" value="1"/>
</dbReference>
<dbReference type="InterPro" id="IPR016161">
    <property type="entry name" value="Ald_DH/histidinol_DH"/>
</dbReference>
<dbReference type="InterPro" id="IPR016163">
    <property type="entry name" value="Ald_DH_C"/>
</dbReference>
<dbReference type="InterPro" id="IPR016162">
    <property type="entry name" value="Ald_DH_N"/>
</dbReference>
<dbReference type="InterPro" id="IPR015590">
    <property type="entry name" value="Aldehyde_DH_dom"/>
</dbReference>
<dbReference type="InterPro" id="IPR020593">
    <property type="entry name" value="G-glutamylP_reductase_CS"/>
</dbReference>
<dbReference type="InterPro" id="IPR012134">
    <property type="entry name" value="Glu-5-SA_DH"/>
</dbReference>
<dbReference type="InterPro" id="IPR000965">
    <property type="entry name" value="GPR_dom"/>
</dbReference>
<dbReference type="NCBIfam" id="NF001221">
    <property type="entry name" value="PRK00197.1"/>
    <property type="match status" value="1"/>
</dbReference>
<dbReference type="NCBIfam" id="TIGR00407">
    <property type="entry name" value="proA"/>
    <property type="match status" value="1"/>
</dbReference>
<dbReference type="PANTHER" id="PTHR11063:SF8">
    <property type="entry name" value="DELTA-1-PYRROLINE-5-CARBOXYLATE SYNTHASE"/>
    <property type="match status" value="1"/>
</dbReference>
<dbReference type="PANTHER" id="PTHR11063">
    <property type="entry name" value="GLUTAMATE SEMIALDEHYDE DEHYDROGENASE"/>
    <property type="match status" value="1"/>
</dbReference>
<dbReference type="Pfam" id="PF00171">
    <property type="entry name" value="Aldedh"/>
    <property type="match status" value="1"/>
</dbReference>
<dbReference type="PIRSF" id="PIRSF000151">
    <property type="entry name" value="GPR"/>
    <property type="match status" value="1"/>
</dbReference>
<dbReference type="SUPFAM" id="SSF53720">
    <property type="entry name" value="ALDH-like"/>
    <property type="match status" value="1"/>
</dbReference>
<dbReference type="PROSITE" id="PS01223">
    <property type="entry name" value="PROA"/>
    <property type="match status" value="1"/>
</dbReference>
<comment type="function">
    <text evidence="1">Catalyzes the NADPH-dependent reduction of L-glutamate 5-phosphate into L-glutamate 5-semialdehyde and phosphate. The product spontaneously undergoes cyclization to form 1-pyrroline-5-carboxylate.</text>
</comment>
<comment type="catalytic activity">
    <reaction evidence="1">
        <text>L-glutamate 5-semialdehyde + phosphate + NADP(+) = L-glutamyl 5-phosphate + NADPH + H(+)</text>
        <dbReference type="Rhea" id="RHEA:19541"/>
        <dbReference type="ChEBI" id="CHEBI:15378"/>
        <dbReference type="ChEBI" id="CHEBI:43474"/>
        <dbReference type="ChEBI" id="CHEBI:57783"/>
        <dbReference type="ChEBI" id="CHEBI:58066"/>
        <dbReference type="ChEBI" id="CHEBI:58274"/>
        <dbReference type="ChEBI" id="CHEBI:58349"/>
        <dbReference type="EC" id="1.2.1.41"/>
    </reaction>
</comment>
<comment type="pathway">
    <text evidence="1">Amino-acid biosynthesis; L-proline biosynthesis; L-glutamate 5-semialdehyde from L-glutamate: step 2/2.</text>
</comment>
<comment type="subcellular location">
    <subcellularLocation>
        <location evidence="1">Cytoplasm</location>
    </subcellularLocation>
</comment>
<comment type="similarity">
    <text evidence="1">Belongs to the gamma-glutamyl phosphate reductase family.</text>
</comment>
<keyword id="KW-0028">Amino-acid biosynthesis</keyword>
<keyword id="KW-0963">Cytoplasm</keyword>
<keyword id="KW-0521">NADP</keyword>
<keyword id="KW-0560">Oxidoreductase</keyword>
<keyword id="KW-0641">Proline biosynthesis</keyword>